<name>EXLB1_ORYSJ</name>
<evidence type="ECO:0000255" key="1"/>
<evidence type="ECO:0000255" key="2">
    <source>
        <dbReference type="PROSITE-ProRule" id="PRU00078"/>
    </source>
</evidence>
<evidence type="ECO:0000255" key="3">
    <source>
        <dbReference type="PROSITE-ProRule" id="PRU00079"/>
    </source>
</evidence>
<evidence type="ECO:0000305" key="4"/>
<keyword id="KW-0325">Glycoprotein</keyword>
<keyword id="KW-1185">Reference proteome</keyword>
<keyword id="KW-0964">Secreted</keyword>
<keyword id="KW-0732">Signal</keyword>
<accession>Q850K7</accession>
<accession>A0A0P0X647</accession>
<accession>A3BK04</accession>
<accession>Q8H4Q7</accession>
<reference key="1">
    <citation type="journal article" date="2005" name="Nature">
        <title>The map-based sequence of the rice genome.</title>
        <authorList>
            <consortium name="International rice genome sequencing project (IRGSP)"/>
        </authorList>
    </citation>
    <scope>NUCLEOTIDE SEQUENCE [LARGE SCALE GENOMIC DNA]</scope>
    <source>
        <strain>cv. Nipponbare</strain>
    </source>
</reference>
<reference key="2">
    <citation type="journal article" date="2013" name="Rice">
        <title>Improvement of the Oryza sativa Nipponbare reference genome using next generation sequence and optical map data.</title>
        <authorList>
            <person name="Kawahara Y."/>
            <person name="de la Bastide M."/>
            <person name="Hamilton J.P."/>
            <person name="Kanamori H."/>
            <person name="McCombie W.R."/>
            <person name="Ouyang S."/>
            <person name="Schwartz D.C."/>
            <person name="Tanaka T."/>
            <person name="Wu J."/>
            <person name="Zhou S."/>
            <person name="Childs K.L."/>
            <person name="Davidson R.M."/>
            <person name="Lin H."/>
            <person name="Quesada-Ocampo L."/>
            <person name="Vaillancourt B."/>
            <person name="Sakai H."/>
            <person name="Lee S.S."/>
            <person name="Kim J."/>
            <person name="Numa H."/>
            <person name="Itoh T."/>
            <person name="Buell C.R."/>
            <person name="Matsumoto T."/>
        </authorList>
    </citation>
    <scope>GENOME REANNOTATION</scope>
    <source>
        <strain>cv. Nipponbare</strain>
    </source>
</reference>
<reference key="3">
    <citation type="journal article" date="2005" name="PLoS Biol.">
        <title>The genomes of Oryza sativa: a history of duplications.</title>
        <authorList>
            <person name="Yu J."/>
            <person name="Wang J."/>
            <person name="Lin W."/>
            <person name="Li S."/>
            <person name="Li H."/>
            <person name="Zhou J."/>
            <person name="Ni P."/>
            <person name="Dong W."/>
            <person name="Hu S."/>
            <person name="Zeng C."/>
            <person name="Zhang J."/>
            <person name="Zhang Y."/>
            <person name="Li R."/>
            <person name="Xu Z."/>
            <person name="Li S."/>
            <person name="Li X."/>
            <person name="Zheng H."/>
            <person name="Cong L."/>
            <person name="Lin L."/>
            <person name="Yin J."/>
            <person name="Geng J."/>
            <person name="Li G."/>
            <person name="Shi J."/>
            <person name="Liu J."/>
            <person name="Lv H."/>
            <person name="Li J."/>
            <person name="Wang J."/>
            <person name="Deng Y."/>
            <person name="Ran L."/>
            <person name="Shi X."/>
            <person name="Wang X."/>
            <person name="Wu Q."/>
            <person name="Li C."/>
            <person name="Ren X."/>
            <person name="Wang J."/>
            <person name="Wang X."/>
            <person name="Li D."/>
            <person name="Liu D."/>
            <person name="Zhang X."/>
            <person name="Ji Z."/>
            <person name="Zhao W."/>
            <person name="Sun Y."/>
            <person name="Zhang Z."/>
            <person name="Bao J."/>
            <person name="Han Y."/>
            <person name="Dong L."/>
            <person name="Ji J."/>
            <person name="Chen P."/>
            <person name="Wu S."/>
            <person name="Liu J."/>
            <person name="Xiao Y."/>
            <person name="Bu D."/>
            <person name="Tan J."/>
            <person name="Yang L."/>
            <person name="Ye C."/>
            <person name="Zhang J."/>
            <person name="Xu J."/>
            <person name="Zhou Y."/>
            <person name="Yu Y."/>
            <person name="Zhang B."/>
            <person name="Zhuang S."/>
            <person name="Wei H."/>
            <person name="Liu B."/>
            <person name="Lei M."/>
            <person name="Yu H."/>
            <person name="Li Y."/>
            <person name="Xu H."/>
            <person name="Wei S."/>
            <person name="He X."/>
            <person name="Fang L."/>
            <person name="Zhang Z."/>
            <person name="Zhang Y."/>
            <person name="Huang X."/>
            <person name="Su Z."/>
            <person name="Tong W."/>
            <person name="Li J."/>
            <person name="Tong Z."/>
            <person name="Li S."/>
            <person name="Ye J."/>
            <person name="Wang L."/>
            <person name="Fang L."/>
            <person name="Lei T."/>
            <person name="Chen C.-S."/>
            <person name="Chen H.-C."/>
            <person name="Xu Z."/>
            <person name="Li H."/>
            <person name="Huang H."/>
            <person name="Zhang F."/>
            <person name="Xu H."/>
            <person name="Li N."/>
            <person name="Zhao C."/>
            <person name="Li S."/>
            <person name="Dong L."/>
            <person name="Huang Y."/>
            <person name="Li L."/>
            <person name="Xi Y."/>
            <person name="Qi Q."/>
            <person name="Li W."/>
            <person name="Zhang B."/>
            <person name="Hu W."/>
            <person name="Zhang Y."/>
            <person name="Tian X."/>
            <person name="Jiao Y."/>
            <person name="Liang X."/>
            <person name="Jin J."/>
            <person name="Gao L."/>
            <person name="Zheng W."/>
            <person name="Hao B."/>
            <person name="Liu S.-M."/>
            <person name="Wang W."/>
            <person name="Yuan L."/>
            <person name="Cao M."/>
            <person name="McDermott J."/>
            <person name="Samudrala R."/>
            <person name="Wang J."/>
            <person name="Wong G.K.-S."/>
            <person name="Yang H."/>
        </authorList>
    </citation>
    <scope>NUCLEOTIDE SEQUENCE [LARGE SCALE GENOMIC DNA]</scope>
    <source>
        <strain>cv. Nipponbare</strain>
    </source>
</reference>
<reference key="4">
    <citation type="submission" date="2006-10" db="EMBL/GenBank/DDBJ databases">
        <title>Oryza sativa full length cDNA.</title>
        <authorList>
            <consortium name="The rice full-length cDNA consortium"/>
        </authorList>
    </citation>
    <scope>NUCLEOTIDE SEQUENCE [LARGE SCALE MRNA]</scope>
    <source>
        <strain>cv. Nipponbare</strain>
    </source>
</reference>
<reference key="5">
    <citation type="journal article" date="2002" name="Plant Physiol.">
        <title>Expression of alpha-expansin and expansin-like genes in deepwater rice.</title>
        <authorList>
            <person name="Lee Y."/>
            <person name="Kende H."/>
        </authorList>
    </citation>
    <scope>NUCLEOTIDE SEQUENCE [GENOMIC DNA] OF 1-186</scope>
</reference>
<reference key="6">
    <citation type="journal article" date="2004" name="Plant Mol. Biol.">
        <title>Nomenclature for members of the expansin superfamily of genes and proteins.</title>
        <authorList>
            <person name="Kende H."/>
            <person name="Bradford K.J."/>
            <person name="Brummell D.A."/>
            <person name="Cho H.-T."/>
            <person name="Cosgrove D.J."/>
            <person name="Fleming A.J."/>
            <person name="Gehring C."/>
            <person name="Lee Y."/>
            <person name="McQueen-Mason S.J."/>
            <person name="Rose J.K.C."/>
            <person name="Voesenek L.A.C."/>
        </authorList>
    </citation>
    <scope>NOMENCLATURE</scope>
</reference>
<gene>
    <name type="primary">EXLB1</name>
    <name type="synonym">EXPR1</name>
    <name type="ordered locus">Os07g0496250</name>
    <name type="ordered locus">LOC_Os07g31390</name>
    <name type="ORF">OJ1457_D07.118</name>
    <name type="ORF">OsJ_023376</name>
</gene>
<comment type="subcellular location">
    <subcellularLocation>
        <location evidence="4">Secreted</location>
    </subcellularLocation>
</comment>
<comment type="similarity">
    <text evidence="4">Belongs to the expansin family. Expansin-like B subfamily.</text>
</comment>
<comment type="sequence caution" evidence="4">
    <conflict type="erroneous gene model prediction">
        <sequence resource="EMBL-CDS" id="BAC21379"/>
    </conflict>
</comment>
<comment type="online information" name="EXPANSIN homepage">
    <link uri="https://www.dept.psu.edu/biology/groups/expansins/index.htm"/>
</comment>
<feature type="signal peptide" evidence="1">
    <location>
        <begin position="1"/>
        <end position="24"/>
    </location>
</feature>
<feature type="chain" id="PRO_0000252102" description="Expansin-like B1">
    <location>
        <begin position="25"/>
        <end position="256"/>
    </location>
</feature>
<feature type="domain" description="Expansin-like EG45" evidence="3">
    <location>
        <begin position="46"/>
        <end position="150"/>
    </location>
</feature>
<feature type="domain" description="Expansin-like CBD" evidence="2">
    <location>
        <begin position="164"/>
        <end position="249"/>
    </location>
</feature>
<feature type="glycosylation site" description="N-linked (GlcNAc...) asparagine" evidence="1">
    <location>
        <position position="27"/>
    </location>
</feature>
<feature type="glycosylation site" description="N-linked (GlcNAc...) asparagine" evidence="1">
    <location>
        <position position="189"/>
    </location>
</feature>
<feature type="glycosylation site" description="N-linked (GlcNAc...) asparagine" evidence="1">
    <location>
        <position position="240"/>
    </location>
</feature>
<sequence length="256" mass="27576">MAQLLRRHLPVILSLILFLSKATADANFTVSRAAYYPNSDIKGTENGACEYGAFGATLNNGDVSASASLYRDGVGCGACYQVRCTNPYYCSPNGVTIVITDSGASDGTDFILSQHAFTRMAQSTDAGTALLTLGVVGIEYRRVSCTYPNKNIVFKITESSNFPNYLEFEIWYQQGNQDIIAVQLCETVNLTCQLLSRTHGAVWAAVSPPSGPLSIRMLFSSGAPRGGDTWLVPTNIVPQNWTAGATYDSGVQVQLQ</sequence>
<organism>
    <name type="scientific">Oryza sativa subsp. japonica</name>
    <name type="common">Rice</name>
    <dbReference type="NCBI Taxonomy" id="39947"/>
    <lineage>
        <taxon>Eukaryota</taxon>
        <taxon>Viridiplantae</taxon>
        <taxon>Streptophyta</taxon>
        <taxon>Embryophyta</taxon>
        <taxon>Tracheophyta</taxon>
        <taxon>Spermatophyta</taxon>
        <taxon>Magnoliopsida</taxon>
        <taxon>Liliopsida</taxon>
        <taxon>Poales</taxon>
        <taxon>Poaceae</taxon>
        <taxon>BOP clade</taxon>
        <taxon>Oryzoideae</taxon>
        <taxon>Oryzeae</taxon>
        <taxon>Oryzinae</taxon>
        <taxon>Oryza</taxon>
        <taxon>Oryza sativa</taxon>
    </lineage>
</organism>
<proteinExistence type="evidence at transcript level"/>
<dbReference type="EMBL" id="AP003956">
    <property type="protein sequence ID" value="BAC21379.1"/>
    <property type="status" value="ALT_SEQ"/>
    <property type="molecule type" value="Genomic_DNA"/>
</dbReference>
<dbReference type="EMBL" id="AP014963">
    <property type="protein sequence ID" value="BAT01603.1"/>
    <property type="molecule type" value="Genomic_DNA"/>
</dbReference>
<dbReference type="EMBL" id="CM000144">
    <property type="protein sequence ID" value="EAZ39893.1"/>
    <property type="molecule type" value="Genomic_DNA"/>
</dbReference>
<dbReference type="EMBL" id="AK240902">
    <property type="protein sequence ID" value="BAH00899.1"/>
    <property type="molecule type" value="mRNA"/>
</dbReference>
<dbReference type="EMBL" id="AF466188">
    <property type="protein sequence ID" value="AAO33384.1"/>
    <property type="molecule type" value="Genomic_DNA"/>
</dbReference>
<dbReference type="RefSeq" id="XP_015647574.1">
    <property type="nucleotide sequence ID" value="XM_015792088.1"/>
</dbReference>
<dbReference type="SMR" id="Q850K7"/>
<dbReference type="FunCoup" id="Q850K7">
    <property type="interactions" value="283"/>
</dbReference>
<dbReference type="GlyCosmos" id="Q850K7">
    <property type="glycosylation" value="3 sites, No reported glycans"/>
</dbReference>
<dbReference type="PaxDb" id="39947-Q850K7"/>
<dbReference type="EnsemblPlants" id="Os07t0496250-01">
    <property type="protein sequence ID" value="Os07t0496250-01"/>
    <property type="gene ID" value="Os07g0496250"/>
</dbReference>
<dbReference type="Gramene" id="Os07t0496250-01">
    <property type="protein sequence ID" value="Os07t0496250-01"/>
    <property type="gene ID" value="Os07g0496250"/>
</dbReference>
<dbReference type="eggNOG" id="ENOG502QV8Z">
    <property type="taxonomic scope" value="Eukaryota"/>
</dbReference>
<dbReference type="HOGENOM" id="CLU_027462_3_1_1"/>
<dbReference type="InParanoid" id="Q850K7"/>
<dbReference type="OMA" id="NGDETWV"/>
<dbReference type="OrthoDB" id="751465at2759"/>
<dbReference type="Proteomes" id="UP000000763">
    <property type="component" value="Chromosome 7"/>
</dbReference>
<dbReference type="Proteomes" id="UP000007752">
    <property type="component" value="Chromosome 7"/>
</dbReference>
<dbReference type="Proteomes" id="UP000059680">
    <property type="component" value="Chromosome 7"/>
</dbReference>
<dbReference type="GO" id="GO:0005576">
    <property type="term" value="C:extracellular region"/>
    <property type="evidence" value="ECO:0007669"/>
    <property type="project" value="UniProtKB-SubCell"/>
</dbReference>
<dbReference type="GO" id="GO:0009828">
    <property type="term" value="P:plant-type cell wall loosening"/>
    <property type="evidence" value="ECO:0000250"/>
    <property type="project" value="UniProtKB"/>
</dbReference>
<dbReference type="CDD" id="cd22277">
    <property type="entry name" value="DPBB_EXLB_N"/>
    <property type="match status" value="1"/>
</dbReference>
<dbReference type="Gene3D" id="2.60.40.760">
    <property type="entry name" value="Expansin, cellulose-binding-like domain"/>
    <property type="match status" value="1"/>
</dbReference>
<dbReference type="Gene3D" id="2.40.40.10">
    <property type="entry name" value="RlpA-like domain"/>
    <property type="match status" value="1"/>
</dbReference>
<dbReference type="InterPro" id="IPR007118">
    <property type="entry name" value="Expan_Lol_pI"/>
</dbReference>
<dbReference type="InterPro" id="IPR007112">
    <property type="entry name" value="Expansin/allergen_DPBB_dom"/>
</dbReference>
<dbReference type="InterPro" id="IPR007117">
    <property type="entry name" value="Expansin_CBD"/>
</dbReference>
<dbReference type="InterPro" id="IPR036749">
    <property type="entry name" value="Expansin_CBD_sf"/>
</dbReference>
<dbReference type="InterPro" id="IPR009009">
    <property type="entry name" value="RlpA-like_DPBB"/>
</dbReference>
<dbReference type="InterPro" id="IPR036908">
    <property type="entry name" value="RlpA-like_sf"/>
</dbReference>
<dbReference type="PANTHER" id="PTHR31692">
    <property type="entry name" value="EXPANSIN-B3"/>
    <property type="match status" value="1"/>
</dbReference>
<dbReference type="PANTHER" id="PTHR31692:SF92">
    <property type="entry name" value="EXPANSIN-LIKE B1"/>
    <property type="match status" value="1"/>
</dbReference>
<dbReference type="Pfam" id="PF03330">
    <property type="entry name" value="DPBB_1"/>
    <property type="match status" value="1"/>
</dbReference>
<dbReference type="Pfam" id="PF01357">
    <property type="entry name" value="Expansin_C"/>
    <property type="match status" value="1"/>
</dbReference>
<dbReference type="PRINTS" id="PR01225">
    <property type="entry name" value="EXPANSNFAMLY"/>
</dbReference>
<dbReference type="SMART" id="SM00837">
    <property type="entry name" value="DPBB_1"/>
    <property type="match status" value="1"/>
</dbReference>
<dbReference type="SUPFAM" id="SSF50685">
    <property type="entry name" value="Barwin-like endoglucanases"/>
    <property type="match status" value="1"/>
</dbReference>
<dbReference type="SUPFAM" id="SSF49590">
    <property type="entry name" value="PHL pollen allergen"/>
    <property type="match status" value="1"/>
</dbReference>
<dbReference type="PROSITE" id="PS50843">
    <property type="entry name" value="EXPANSIN_CBD"/>
    <property type="match status" value="1"/>
</dbReference>
<dbReference type="PROSITE" id="PS50842">
    <property type="entry name" value="EXPANSIN_EG45"/>
    <property type="match status" value="1"/>
</dbReference>
<protein>
    <recommendedName>
        <fullName>Expansin-like B1</fullName>
    </recommendedName>
    <alternativeName>
        <fullName>Expansin-related 1</fullName>
    </alternativeName>
    <alternativeName>
        <fullName>OsEXLB1</fullName>
    </alternativeName>
    <alternativeName>
        <fullName>OsEXPR1</fullName>
    </alternativeName>
    <alternativeName>
        <fullName>OsaEXPb3.1</fullName>
    </alternativeName>
</protein>